<gene>
    <name type="ordered locus">FPV251</name>
</gene>
<sequence>MLKLICLRNFNTFSILGVVDSLNNGKNINKIISKKDMTLKEIVLYLPKFELEDDVDLKDALIHMGCNDLFKSGELVGISDTKTLRIGNIRQKSVIKVDEYGTEAASVTESCTTDGIKKIPIVKANVPFMFLVADVQTKIPLFLGIFQG</sequence>
<reference key="1">
    <citation type="journal article" date="1988" name="J. Gen. Virol.">
        <title>Sequence analysis of an 11.2 kilobase, near-terminal, BamHI fragment of fowlpox virus.</title>
        <authorList>
            <person name="Tomley F."/>
            <person name="Binns M."/>
            <person name="Campbell J."/>
            <person name="Boursnell M.E.G."/>
        </authorList>
    </citation>
    <scope>NUCLEOTIDE SEQUENCE [GENOMIC DNA]</scope>
    <source>
        <strain>FP-9 / Isolate HP-438</strain>
    </source>
</reference>
<reference key="2">
    <citation type="journal article" date="2000" name="J. Virol.">
        <title>The genome of fowlpox virus.</title>
        <authorList>
            <person name="Afonso C.L."/>
            <person name="Tulman E.R."/>
            <person name="Lu Z."/>
            <person name="Zsak L."/>
            <person name="Kutish G.F."/>
            <person name="Rock D.L."/>
        </authorList>
    </citation>
    <scope>NUCLEOTIDE SEQUENCE [LARGE SCALE GENOMIC DNA]</scope>
</reference>
<proteinExistence type="inferred from homology"/>
<evidence type="ECO:0000305" key="1"/>
<protein>
    <recommendedName>
        <fullName>Uncharacterized serpin-like protein FPV251</fullName>
    </recommendedName>
</protein>
<keyword id="KW-0646">Protease inhibitor</keyword>
<keyword id="KW-1185">Reference proteome</keyword>
<keyword id="KW-0722">Serine protease inhibitor</keyword>
<organism>
    <name type="scientific">Fowlpox virus (strain NVSL)</name>
    <name type="common">FPV</name>
    <dbReference type="NCBI Taxonomy" id="928301"/>
    <lineage>
        <taxon>Viruses</taxon>
        <taxon>Varidnaviria</taxon>
        <taxon>Bamfordvirae</taxon>
        <taxon>Nucleocytoviricota</taxon>
        <taxon>Pokkesviricetes</taxon>
        <taxon>Chitovirales</taxon>
        <taxon>Poxviridae</taxon>
        <taxon>Chordopoxvirinae</taxon>
        <taxon>Avipoxvirus</taxon>
        <taxon>Fowlpox virus</taxon>
    </lineage>
</organism>
<comment type="similarity">
    <text evidence="1">Belongs to the serpin family. Poxviruses subfamily.</text>
</comment>
<name>V251_FOWPN</name>
<feature type="chain" id="PRO_0000094158" description="Uncharacterized serpin-like protein FPV251">
    <location>
        <begin position="1"/>
        <end position="148"/>
    </location>
</feature>
<feature type="sequence conflict" description="In Ref. 1; BAA00194." evidence="1" ref="1">
    <original>S</original>
    <variation>L</variation>
    <location>
        <position position="110"/>
    </location>
</feature>
<organismHost>
    <name type="scientific">Vertebrata</name>
    <dbReference type="NCBI Taxonomy" id="7742"/>
</organismHost>
<accession>P14369</accession>
<accession>Q9J4Z2</accession>
<dbReference type="EMBL" id="D00295">
    <property type="protein sequence ID" value="BAA00194.1"/>
    <property type="molecule type" value="Genomic_DNA"/>
</dbReference>
<dbReference type="EMBL" id="AF198100">
    <property type="protein sequence ID" value="AAF44595.1"/>
    <property type="molecule type" value="Genomic_DNA"/>
</dbReference>
<dbReference type="PIR" id="C29963">
    <property type="entry name" value="WMVZF3"/>
</dbReference>
<dbReference type="RefSeq" id="NP_039214.1">
    <property type="nucleotide sequence ID" value="NC_002188.1"/>
</dbReference>
<dbReference type="SMR" id="P14369"/>
<dbReference type="GeneID" id="1486823"/>
<dbReference type="KEGG" id="vg:1486823"/>
<dbReference type="Proteomes" id="UP000008597">
    <property type="component" value="Segment"/>
</dbReference>
<dbReference type="GO" id="GO:0005615">
    <property type="term" value="C:extracellular space"/>
    <property type="evidence" value="ECO:0007669"/>
    <property type="project" value="InterPro"/>
</dbReference>
<dbReference type="GO" id="GO:0004867">
    <property type="term" value="F:serine-type endopeptidase inhibitor activity"/>
    <property type="evidence" value="ECO:0007669"/>
    <property type="project" value="UniProtKB-KW"/>
</dbReference>
<dbReference type="Gene3D" id="2.30.39.10">
    <property type="entry name" value="Alpha-1-antitrypsin, domain 1"/>
    <property type="match status" value="1"/>
</dbReference>
<dbReference type="Gene3D" id="3.30.497.10">
    <property type="entry name" value="Antithrombin, subunit I, domain 2"/>
    <property type="match status" value="1"/>
</dbReference>
<dbReference type="InterPro" id="IPR023796">
    <property type="entry name" value="Serpin_dom"/>
</dbReference>
<dbReference type="InterPro" id="IPR000215">
    <property type="entry name" value="Serpin_fam"/>
</dbReference>
<dbReference type="InterPro" id="IPR036186">
    <property type="entry name" value="Serpin_sf"/>
</dbReference>
<dbReference type="InterPro" id="IPR042178">
    <property type="entry name" value="Serpin_sf_1"/>
</dbReference>
<dbReference type="InterPro" id="IPR042185">
    <property type="entry name" value="Serpin_sf_2"/>
</dbReference>
<dbReference type="PANTHER" id="PTHR11461:SF211">
    <property type="entry name" value="GH10112P-RELATED"/>
    <property type="match status" value="1"/>
</dbReference>
<dbReference type="PANTHER" id="PTHR11461">
    <property type="entry name" value="SERINE PROTEASE INHIBITOR, SERPIN"/>
    <property type="match status" value="1"/>
</dbReference>
<dbReference type="Pfam" id="PF00079">
    <property type="entry name" value="Serpin"/>
    <property type="match status" value="1"/>
</dbReference>
<dbReference type="SUPFAM" id="SSF56574">
    <property type="entry name" value="Serpins"/>
    <property type="match status" value="1"/>
</dbReference>